<sequence length="297" mass="31470">MENGNGEGKGEFINQNNDFFLDSMSMLSSLPPCWDPSLPPPPPPPQSLFHALAVDAPFPDQFHHPQESGGPTMGSQEGLQPQGTVSTTSAPVVRQKPRVRARRGQATDPHSIAERLRRERIAERMKSLQELVPNTNKTDKASMLDEIIEYVRFLQLQVKVLSMSRLGGAGSVGPRLNGLSAEAGGRLNALTAPCNGLNGNGNATGSSNESLRSTEQRVAKLMEEDMGSAMQYLQGKGLCLMPISLATAISSSTTHSRGSLFNPISSAVAAEDSNVTATAVAAPEASSTMDDVSASKA</sequence>
<proteinExistence type="evidence at transcript level"/>
<name>LRL3_ARATH</name>
<comment type="function">
    <text evidence="5 6">Transcription factor that regulates the development of root hairs (PubMed:19675148). Does not seem to be involved in the regulation of sperm cell development (PubMed:28585562).</text>
</comment>
<comment type="subunit">
    <text evidence="10">Homodimer.</text>
</comment>
<comment type="subcellular location">
    <subcellularLocation>
        <location evidence="1 4">Nucleus</location>
    </subcellularLocation>
</comment>
<comment type="tissue specificity">
    <text evidence="3 4">Expressed in trichomes of the root maturation zone. Detected constitutively in flowers.</text>
</comment>
<comment type="induction">
    <text evidence="3">Repressed by heat treatment.</text>
</comment>
<comment type="disruption phenotype">
    <text evidence="5 6">No visible phenotype under normal growth conditions (PubMed:19675148, PubMed:28585562). The triple mutant lrl1, lrl2 and lrl3 exhibit very short root hairs (PubMed:19675148).</text>
</comment>
<accession>Q9LSQ3</accession>
<gene>
    <name evidence="8" type="primary">LRL3</name>
    <name evidence="7" type="synonym">BHLH82</name>
    <name evidence="9" type="synonym">DROP3</name>
    <name evidence="10" type="synonym">EN96</name>
    <name evidence="11" type="ordered locus">At5g58010</name>
    <name evidence="12" type="ORF">F2C19.2</name>
</gene>
<dbReference type="EMBL" id="AB026635">
    <property type="protein sequence ID" value="BAA97525.1"/>
    <property type="molecule type" value="Genomic_DNA"/>
</dbReference>
<dbReference type="EMBL" id="CP002688">
    <property type="protein sequence ID" value="AED96987.1"/>
    <property type="molecule type" value="Genomic_DNA"/>
</dbReference>
<dbReference type="EMBL" id="AF488614">
    <property type="status" value="NOT_ANNOTATED_CDS"/>
    <property type="molecule type" value="mRNA"/>
</dbReference>
<dbReference type="RefSeq" id="NP_200609.1">
    <property type="nucleotide sequence ID" value="NM_125186.4"/>
</dbReference>
<dbReference type="SMR" id="Q9LSQ3"/>
<dbReference type="BioGRID" id="21157">
    <property type="interactions" value="3"/>
</dbReference>
<dbReference type="FunCoup" id="Q9LSQ3">
    <property type="interactions" value="16"/>
</dbReference>
<dbReference type="STRING" id="3702.Q9LSQ3"/>
<dbReference type="GlyGen" id="Q9LSQ3">
    <property type="glycosylation" value="1 site"/>
</dbReference>
<dbReference type="PaxDb" id="3702-AT5G58010.1"/>
<dbReference type="ProteomicsDB" id="240864"/>
<dbReference type="EnsemblPlants" id="AT5G58010.1">
    <property type="protein sequence ID" value="AT5G58010.1"/>
    <property type="gene ID" value="AT5G58010"/>
</dbReference>
<dbReference type="GeneID" id="835913"/>
<dbReference type="Gramene" id="AT5G58010.1">
    <property type="protein sequence ID" value="AT5G58010.1"/>
    <property type="gene ID" value="AT5G58010"/>
</dbReference>
<dbReference type="KEGG" id="ath:AT5G58010"/>
<dbReference type="Araport" id="AT5G58010"/>
<dbReference type="TAIR" id="AT5G58010">
    <property type="gene designation" value="LRL3"/>
</dbReference>
<dbReference type="eggNOG" id="ENOG502QQDT">
    <property type="taxonomic scope" value="Eukaryota"/>
</dbReference>
<dbReference type="HOGENOM" id="CLU_044273_2_1_1"/>
<dbReference type="InParanoid" id="Q9LSQ3"/>
<dbReference type="OMA" id="APCNGLN"/>
<dbReference type="OrthoDB" id="2020857at2759"/>
<dbReference type="PhylomeDB" id="Q9LSQ3"/>
<dbReference type="PRO" id="PR:Q9LSQ3"/>
<dbReference type="Proteomes" id="UP000006548">
    <property type="component" value="Chromosome 5"/>
</dbReference>
<dbReference type="ExpressionAtlas" id="Q9LSQ3">
    <property type="expression patterns" value="baseline and differential"/>
</dbReference>
<dbReference type="GO" id="GO:0005634">
    <property type="term" value="C:nucleus"/>
    <property type="evidence" value="ECO:0000314"/>
    <property type="project" value="TAIR"/>
</dbReference>
<dbReference type="GO" id="GO:0003700">
    <property type="term" value="F:DNA-binding transcription factor activity"/>
    <property type="evidence" value="ECO:0000250"/>
    <property type="project" value="TAIR"/>
</dbReference>
<dbReference type="GO" id="GO:0046983">
    <property type="term" value="F:protein dimerization activity"/>
    <property type="evidence" value="ECO:0007669"/>
    <property type="project" value="InterPro"/>
</dbReference>
<dbReference type="GO" id="GO:0000976">
    <property type="term" value="F:transcription cis-regulatory region binding"/>
    <property type="evidence" value="ECO:0000353"/>
    <property type="project" value="TAIR"/>
</dbReference>
<dbReference type="GO" id="GO:0006355">
    <property type="term" value="P:regulation of DNA-templated transcription"/>
    <property type="evidence" value="ECO:0000304"/>
    <property type="project" value="TAIR"/>
</dbReference>
<dbReference type="GO" id="GO:0080147">
    <property type="term" value="P:root hair cell development"/>
    <property type="evidence" value="ECO:0000315"/>
    <property type="project" value="TAIR"/>
</dbReference>
<dbReference type="FunFam" id="4.10.280.10:FF:000017">
    <property type="entry name" value="Transcription factor bHLH66"/>
    <property type="match status" value="1"/>
</dbReference>
<dbReference type="Gene3D" id="4.10.280.10">
    <property type="entry name" value="Helix-loop-helix DNA-binding domain"/>
    <property type="match status" value="1"/>
</dbReference>
<dbReference type="InterPro" id="IPR011598">
    <property type="entry name" value="bHLH_dom"/>
</dbReference>
<dbReference type="InterPro" id="IPR036638">
    <property type="entry name" value="HLH_DNA-bd_sf"/>
</dbReference>
<dbReference type="InterPro" id="IPR045843">
    <property type="entry name" value="IND-like"/>
</dbReference>
<dbReference type="PANTHER" id="PTHR16223">
    <property type="entry name" value="TRANSCRIPTION FACTOR BHLH83-RELATED"/>
    <property type="match status" value="1"/>
</dbReference>
<dbReference type="PANTHER" id="PTHR16223:SF376">
    <property type="entry name" value="TRANSCRIPTION FACTOR LRL3"/>
    <property type="match status" value="1"/>
</dbReference>
<dbReference type="Pfam" id="PF00010">
    <property type="entry name" value="HLH"/>
    <property type="match status" value="1"/>
</dbReference>
<dbReference type="SMART" id="SM00353">
    <property type="entry name" value="HLH"/>
    <property type="match status" value="1"/>
</dbReference>
<dbReference type="SUPFAM" id="SSF47459">
    <property type="entry name" value="HLH, helix-loop-helix DNA-binding domain"/>
    <property type="match status" value="1"/>
</dbReference>
<dbReference type="PROSITE" id="PS50888">
    <property type="entry name" value="BHLH"/>
    <property type="match status" value="1"/>
</dbReference>
<reference key="1">
    <citation type="submission" date="1999-04" db="EMBL/GenBank/DDBJ databases">
        <title>Structural analysis of Arabidopsis thaliana chromosome 5. XI.</title>
        <authorList>
            <person name="Kaneko T."/>
            <person name="Katoh T."/>
            <person name="Asamizu E."/>
            <person name="Sato S."/>
            <person name="Nakamura Y."/>
            <person name="Kotani H."/>
            <person name="Tabata S."/>
        </authorList>
    </citation>
    <scope>NUCLEOTIDE SEQUENCE [LARGE SCALE GENOMIC DNA]</scope>
    <source>
        <strain>cv. Columbia</strain>
    </source>
</reference>
<reference key="2">
    <citation type="journal article" date="2017" name="Plant J.">
        <title>Araport11: a complete reannotation of the Arabidopsis thaliana reference genome.</title>
        <authorList>
            <person name="Cheng C.Y."/>
            <person name="Krishnakumar V."/>
            <person name="Chan A.P."/>
            <person name="Thibaud-Nissen F."/>
            <person name="Schobel S."/>
            <person name="Town C.D."/>
        </authorList>
    </citation>
    <scope>GENOME REANNOTATION</scope>
    <source>
        <strain>cv. Columbia</strain>
    </source>
</reference>
<reference key="3">
    <citation type="journal article" date="2003" name="Mol. Biol. Evol.">
        <title>The basic helix-loop-helix transcription factor family in plants: a genome-wide study of protein structure and functional diversity.</title>
        <authorList>
            <person name="Heim M.A."/>
            <person name="Jakoby M."/>
            <person name="Werber M."/>
            <person name="Martin C."/>
            <person name="Weisshaar B."/>
            <person name="Bailey P.C."/>
        </authorList>
    </citation>
    <scope>NUCLEOTIDE SEQUENCE [MRNA] OF 15-297</scope>
    <scope>TISSUE SPECIFICITY</scope>
    <scope>INDUCTION</scope>
    <scope>GENE FAMILY</scope>
    <scope>NOMENCLATURE</scope>
    <source>
        <strain>cv. Columbia</strain>
    </source>
</reference>
<reference key="4">
    <citation type="journal article" date="2003" name="Plant Cell">
        <title>The Arabidopsis basic/helix-loop-helix transcription factor family.</title>
        <authorList>
            <person name="Toledo-Ortiz G."/>
            <person name="Huq E."/>
            <person name="Quail P.H."/>
        </authorList>
    </citation>
    <scope>GENE FAMILY</scope>
</reference>
<reference key="5">
    <citation type="journal article" date="2003" name="Plant Cell">
        <title>Update on the basic helix-loop-helix transcription factor gene family in Arabidopsis thaliana.</title>
        <authorList>
            <person name="Bailey P.C."/>
            <person name="Martin C."/>
            <person name="Toledo-Ortiz G."/>
            <person name="Quail P.H."/>
            <person name="Huq E."/>
            <person name="Heim M.A."/>
            <person name="Jakoby M."/>
            <person name="Werber M."/>
            <person name="Weisshaar B."/>
        </authorList>
    </citation>
    <scope>GENE FAMILY</scope>
    <scope>NOMENCLATURE</scope>
</reference>
<reference key="6">
    <citation type="journal article" date="2006" name="Proc. Natl. Acad. Sci. U.S.A.">
        <title>Transcriptional and posttranscriptional regulation of transcription factor expression in Arabidopsis roots.</title>
        <authorList>
            <person name="Lee J.-Y."/>
            <person name="Colinas J."/>
            <person name="Wang J.Y."/>
            <person name="Mace D."/>
            <person name="Ohler U."/>
            <person name="Benfey P.N."/>
        </authorList>
    </citation>
    <scope>TISSUE SPECIFICITY</scope>
    <scope>SUBCELLULAR LOCATION</scope>
</reference>
<reference key="7">
    <citation type="journal article" date="2009" name="Plant Physiol.">
        <title>Conservation of lotus and Arabidopsis basic helix-loop-helix proteins reveals new players in root hair development.</title>
        <authorList>
            <person name="Karas B."/>
            <person name="Amyot L."/>
            <person name="Johansen C."/>
            <person name="Sato S."/>
            <person name="Tabata S."/>
            <person name="Kawaguchi M."/>
            <person name="Szczyglowski K."/>
        </authorList>
    </citation>
    <scope>FUNCTION</scope>
    <scope>DISRUPTION PHENOTYPE</scope>
</reference>
<reference key="8">
    <citation type="journal article" date="2017" name="Nat. Plants">
        <title>Sperm cells are passive cargo of the pollen tube in plant fertilization.</title>
        <authorList>
            <person name="Zhang J."/>
            <person name="Huang Q."/>
            <person name="Zhong S."/>
            <person name="Bleckmann A."/>
            <person name="Huang J."/>
            <person name="Guo X."/>
            <person name="Lin Q."/>
            <person name="Gu H."/>
            <person name="Dong J."/>
            <person name="Dresselhaus T."/>
            <person name="Qu L.J."/>
        </authorList>
    </citation>
    <scope>FUNCTION</scope>
    <scope>DISRUPTION PHENOTYPE</scope>
</reference>
<evidence type="ECO:0000255" key="1">
    <source>
        <dbReference type="PROSITE-ProRule" id="PRU00981"/>
    </source>
</evidence>
<evidence type="ECO:0000256" key="2">
    <source>
        <dbReference type="SAM" id="MobiDB-lite"/>
    </source>
</evidence>
<evidence type="ECO:0000269" key="3">
    <source>
    </source>
</evidence>
<evidence type="ECO:0000269" key="4">
    <source>
    </source>
</evidence>
<evidence type="ECO:0000269" key="5">
    <source>
    </source>
</evidence>
<evidence type="ECO:0000269" key="6">
    <source>
    </source>
</evidence>
<evidence type="ECO:0000303" key="7">
    <source>
    </source>
</evidence>
<evidence type="ECO:0000303" key="8">
    <source>
    </source>
</evidence>
<evidence type="ECO:0000303" key="9">
    <source>
    </source>
</evidence>
<evidence type="ECO:0000305" key="10"/>
<evidence type="ECO:0000312" key="11">
    <source>
        <dbReference type="Araport" id="AT5G58010"/>
    </source>
</evidence>
<evidence type="ECO:0000312" key="12">
    <source>
        <dbReference type="EMBL" id="BAA97525.1"/>
    </source>
</evidence>
<organism>
    <name type="scientific">Arabidopsis thaliana</name>
    <name type="common">Mouse-ear cress</name>
    <dbReference type="NCBI Taxonomy" id="3702"/>
    <lineage>
        <taxon>Eukaryota</taxon>
        <taxon>Viridiplantae</taxon>
        <taxon>Streptophyta</taxon>
        <taxon>Embryophyta</taxon>
        <taxon>Tracheophyta</taxon>
        <taxon>Spermatophyta</taxon>
        <taxon>Magnoliopsida</taxon>
        <taxon>eudicotyledons</taxon>
        <taxon>Gunneridae</taxon>
        <taxon>Pentapetalae</taxon>
        <taxon>rosids</taxon>
        <taxon>malvids</taxon>
        <taxon>Brassicales</taxon>
        <taxon>Brassicaceae</taxon>
        <taxon>Camelineae</taxon>
        <taxon>Arabidopsis</taxon>
    </lineage>
</organism>
<protein>
    <recommendedName>
        <fullName evidence="10">Transcription factor LRL3</fullName>
    </recommendedName>
    <alternativeName>
        <fullName evidence="7">Basic helix-loop-helix protein 82</fullName>
        <shortName evidence="7">AtbHLH82</shortName>
        <shortName evidence="7">bHLH 82</shortName>
    </alternativeName>
    <alternativeName>
        <fullName evidence="9">Protein DEFECTIVE REGION OF POLLEN 3</fullName>
    </alternativeName>
    <alternativeName>
        <fullName evidence="8">Protein LJRHL1- LIKE 3</fullName>
        <shortName evidence="8">AtLRL3</shortName>
    </alternativeName>
    <alternativeName>
        <fullName evidence="10">Transcription factor EN 96</fullName>
    </alternativeName>
    <alternativeName>
        <fullName evidence="10">Transcription factor bHLH82</fullName>
    </alternativeName>
    <alternativeName>
        <fullName evidence="7">bHLH transcription factor bHLH082</fullName>
    </alternativeName>
</protein>
<feature type="chain" id="PRO_0000358774" description="Transcription factor LRL3">
    <location>
        <begin position="1"/>
        <end position="297"/>
    </location>
</feature>
<feature type="domain" description="bHLH" evidence="1">
    <location>
        <begin position="105"/>
        <end position="154"/>
    </location>
</feature>
<feature type="region of interest" description="Disordered" evidence="2">
    <location>
        <begin position="59"/>
        <end position="109"/>
    </location>
</feature>
<feature type="region of interest" description="Basic motif; degenerate" evidence="1">
    <location>
        <begin position="105"/>
        <end position="118"/>
    </location>
</feature>
<feature type="region of interest" description="Helix-loop-helix motif" evidence="1">
    <location>
        <begin position="119"/>
        <end position="154"/>
    </location>
</feature>
<feature type="compositionally biased region" description="Polar residues" evidence="2">
    <location>
        <begin position="73"/>
        <end position="90"/>
    </location>
</feature>
<feature type="sequence conflict" description="In Ref. 3; AF488614." evidence="10" ref="3">
    <original>S</original>
    <variation>F</variation>
    <location>
        <position position="287"/>
    </location>
</feature>
<keyword id="KW-0238">DNA-binding</keyword>
<keyword id="KW-0539">Nucleus</keyword>
<keyword id="KW-1185">Reference proteome</keyword>
<keyword id="KW-0804">Transcription</keyword>
<keyword id="KW-0805">Transcription regulation</keyword>